<protein>
    <recommendedName>
        <fullName evidence="3">Oligopeptide transport ATP-binding protein OppF</fullName>
        <ecNumber evidence="1">7.4.2.6</ecNumber>
    </recommendedName>
</protein>
<comment type="function">
    <text evidence="1">Part of the ABC transporter complex OppABCDF involved in the uptake of oligopeptides (By similarity). Probably responsible for energy coupling to the transport system (By similarity).</text>
</comment>
<comment type="catalytic activity">
    <reaction evidence="1">
        <text>a [peptide](out) + ATP + H2O = a [peptide](in) + ADP + phosphate + H(+)</text>
        <dbReference type="Rhea" id="RHEA:78459"/>
        <dbReference type="Rhea" id="RHEA-COMP:19083"/>
        <dbReference type="ChEBI" id="CHEBI:15377"/>
        <dbReference type="ChEBI" id="CHEBI:15378"/>
        <dbReference type="ChEBI" id="CHEBI:30616"/>
        <dbReference type="ChEBI" id="CHEBI:33710"/>
        <dbReference type="ChEBI" id="CHEBI:43474"/>
        <dbReference type="ChEBI" id="CHEBI:456216"/>
        <dbReference type="EC" id="7.4.2.6"/>
    </reaction>
    <physiologicalReaction direction="left-to-right" evidence="1">
        <dbReference type="Rhea" id="RHEA:78460"/>
    </physiologicalReaction>
</comment>
<comment type="subunit">
    <text evidence="1">The complex is composed of two ATP-binding proteins (OppD and OppF), two transmembrane proteins (OppB and OppC) and a solute-binding protein (OppA).</text>
</comment>
<comment type="subcellular location">
    <subcellularLocation>
        <location evidence="1">Cell membrane</location>
        <topology evidence="1">Peripheral membrane protein</topology>
    </subcellularLocation>
</comment>
<comment type="similarity">
    <text evidence="3">Belongs to the ABC transporter superfamily.</text>
</comment>
<evidence type="ECO:0000250" key="1">
    <source>
        <dbReference type="UniProtKB" id="P24137"/>
    </source>
</evidence>
<evidence type="ECO:0000255" key="2">
    <source>
        <dbReference type="PROSITE-ProRule" id="PRU00434"/>
    </source>
</evidence>
<evidence type="ECO:0000305" key="3"/>
<reference key="1">
    <citation type="journal article" date="2003" name="Genome Res.">
        <title>Genome sequence of an M3 strain of Streptococcus pyogenes reveals a large-scale genomic rearrangement in invasive strains and new insights into phage evolution.</title>
        <authorList>
            <person name="Nakagawa I."/>
            <person name="Kurokawa K."/>
            <person name="Yamashita A."/>
            <person name="Nakata M."/>
            <person name="Tomiyasu Y."/>
            <person name="Okahashi N."/>
            <person name="Kawabata S."/>
            <person name="Yamazaki K."/>
            <person name="Shiba T."/>
            <person name="Yasunaga T."/>
            <person name="Hayashi H."/>
            <person name="Hattori M."/>
            <person name="Hamada S."/>
        </authorList>
    </citation>
    <scope>NUCLEOTIDE SEQUENCE [LARGE SCALE GENOMIC DNA]</scope>
    <source>
        <strain>SSI-1</strain>
    </source>
</reference>
<sequence>MSEKLVEVKDLEISFGEGKKKFVAVKNANFFIKKGETFSLVGESGSGKTTIGRAIIGLNDTSSGQILYDGKVINGRKSKSEANELIRKIQMIFQDPAASLNERATVDYIISEGLYNFNLFKTEEERKEKIKNMMAEVGLLSEHLTRYPHEFSGGQRQRIGIARALVMNPEFVIADEPISALDVSVRAQVLNLLKRMQAEKGLTYLFIAHDLSVVRFISDRIAVIHKGVIVEVAETEELFNNPIHPYTQSLLSAVPIPDPILERQKELVVYHPDQHDYTLDKPSMVEIKPNHFVWANQAEIEKYQKEL</sequence>
<organism>
    <name type="scientific">Streptococcus pyogenes serotype M3 (strain SSI-1)</name>
    <dbReference type="NCBI Taxonomy" id="193567"/>
    <lineage>
        <taxon>Bacteria</taxon>
        <taxon>Bacillati</taxon>
        <taxon>Bacillota</taxon>
        <taxon>Bacilli</taxon>
        <taxon>Lactobacillales</taxon>
        <taxon>Streptococcaceae</taxon>
        <taxon>Streptococcus</taxon>
    </lineage>
</organism>
<feature type="chain" id="PRO_0000411254" description="Oligopeptide transport ATP-binding protein OppF">
    <location>
        <begin position="1"/>
        <end position="307"/>
    </location>
</feature>
<feature type="domain" description="ABC transporter" evidence="2">
    <location>
        <begin position="6"/>
        <end position="251"/>
    </location>
</feature>
<feature type="binding site" evidence="2">
    <location>
        <begin position="42"/>
        <end position="49"/>
    </location>
    <ligand>
        <name>ATP</name>
        <dbReference type="ChEBI" id="CHEBI:30616"/>
    </ligand>
</feature>
<dbReference type="EC" id="7.4.2.6" evidence="1"/>
<dbReference type="EMBL" id="BA000034">
    <property type="protein sequence ID" value="BAC63320.1"/>
    <property type="molecule type" value="Genomic_DNA"/>
</dbReference>
<dbReference type="RefSeq" id="WP_002986000.1">
    <property type="nucleotide sequence ID" value="NC_004606.1"/>
</dbReference>
<dbReference type="SMR" id="P0CZ33"/>
<dbReference type="KEGG" id="sps:SPs0225"/>
<dbReference type="HOGENOM" id="CLU_000604_1_23_9"/>
<dbReference type="GO" id="GO:0005886">
    <property type="term" value="C:plasma membrane"/>
    <property type="evidence" value="ECO:0007669"/>
    <property type="project" value="UniProtKB-SubCell"/>
</dbReference>
<dbReference type="GO" id="GO:0005524">
    <property type="term" value="F:ATP binding"/>
    <property type="evidence" value="ECO:0007669"/>
    <property type="project" value="UniProtKB-KW"/>
</dbReference>
<dbReference type="GO" id="GO:0016887">
    <property type="term" value="F:ATP hydrolysis activity"/>
    <property type="evidence" value="ECO:0007669"/>
    <property type="project" value="InterPro"/>
</dbReference>
<dbReference type="GO" id="GO:0015833">
    <property type="term" value="P:peptide transport"/>
    <property type="evidence" value="ECO:0007669"/>
    <property type="project" value="UniProtKB-KW"/>
</dbReference>
<dbReference type="GO" id="GO:0015031">
    <property type="term" value="P:protein transport"/>
    <property type="evidence" value="ECO:0007669"/>
    <property type="project" value="UniProtKB-KW"/>
</dbReference>
<dbReference type="GO" id="GO:0055085">
    <property type="term" value="P:transmembrane transport"/>
    <property type="evidence" value="ECO:0007669"/>
    <property type="project" value="UniProtKB-ARBA"/>
</dbReference>
<dbReference type="CDD" id="cd03257">
    <property type="entry name" value="ABC_NikE_OppD_transporters"/>
    <property type="match status" value="1"/>
</dbReference>
<dbReference type="FunFam" id="3.40.50.300:FF:000016">
    <property type="entry name" value="Oligopeptide ABC transporter ATP-binding component"/>
    <property type="match status" value="1"/>
</dbReference>
<dbReference type="Gene3D" id="3.40.50.300">
    <property type="entry name" value="P-loop containing nucleotide triphosphate hydrolases"/>
    <property type="match status" value="1"/>
</dbReference>
<dbReference type="InterPro" id="IPR003593">
    <property type="entry name" value="AAA+_ATPase"/>
</dbReference>
<dbReference type="InterPro" id="IPR050319">
    <property type="entry name" value="ABC_transp_ATP-bind"/>
</dbReference>
<dbReference type="InterPro" id="IPR003439">
    <property type="entry name" value="ABC_transporter-like_ATP-bd"/>
</dbReference>
<dbReference type="InterPro" id="IPR017871">
    <property type="entry name" value="ABC_transporter-like_CS"/>
</dbReference>
<dbReference type="InterPro" id="IPR013563">
    <property type="entry name" value="Oligopep_ABC_C"/>
</dbReference>
<dbReference type="InterPro" id="IPR027417">
    <property type="entry name" value="P-loop_NTPase"/>
</dbReference>
<dbReference type="PANTHER" id="PTHR43776:SF7">
    <property type="entry name" value="D,D-DIPEPTIDE TRANSPORT ATP-BINDING PROTEIN DDPF-RELATED"/>
    <property type="match status" value="1"/>
</dbReference>
<dbReference type="PANTHER" id="PTHR43776">
    <property type="entry name" value="TRANSPORT ATP-BINDING PROTEIN"/>
    <property type="match status" value="1"/>
</dbReference>
<dbReference type="Pfam" id="PF00005">
    <property type="entry name" value="ABC_tran"/>
    <property type="match status" value="1"/>
</dbReference>
<dbReference type="Pfam" id="PF08352">
    <property type="entry name" value="oligo_HPY"/>
    <property type="match status" value="1"/>
</dbReference>
<dbReference type="SMART" id="SM00382">
    <property type="entry name" value="AAA"/>
    <property type="match status" value="1"/>
</dbReference>
<dbReference type="SUPFAM" id="SSF52540">
    <property type="entry name" value="P-loop containing nucleoside triphosphate hydrolases"/>
    <property type="match status" value="1"/>
</dbReference>
<dbReference type="PROSITE" id="PS00211">
    <property type="entry name" value="ABC_TRANSPORTER_1"/>
    <property type="match status" value="1"/>
</dbReference>
<dbReference type="PROSITE" id="PS50893">
    <property type="entry name" value="ABC_TRANSPORTER_2"/>
    <property type="match status" value="1"/>
</dbReference>
<gene>
    <name type="primary">oppF</name>
    <name type="ordered locus">SPs0225</name>
</gene>
<proteinExistence type="inferred from homology"/>
<keyword id="KW-0067">ATP-binding</keyword>
<keyword id="KW-1003">Cell membrane</keyword>
<keyword id="KW-0472">Membrane</keyword>
<keyword id="KW-0547">Nucleotide-binding</keyword>
<keyword id="KW-0571">Peptide transport</keyword>
<keyword id="KW-0653">Protein transport</keyword>
<keyword id="KW-1278">Translocase</keyword>
<keyword id="KW-0813">Transport</keyword>
<accession>P0CZ33</accession>
<accession>P0A2V7</accession>
<accession>Q9F5U1</accession>
<name>OPPF_STRPQ</name>